<reference key="1">
    <citation type="journal article" date="2007" name="PLoS Genet.">
        <title>Patterns and implications of gene gain and loss in the evolution of Prochlorococcus.</title>
        <authorList>
            <person name="Kettler G.C."/>
            <person name="Martiny A.C."/>
            <person name="Huang K."/>
            <person name="Zucker J."/>
            <person name="Coleman M.L."/>
            <person name="Rodrigue S."/>
            <person name="Chen F."/>
            <person name="Lapidus A."/>
            <person name="Ferriera S."/>
            <person name="Johnson J."/>
            <person name="Steglich C."/>
            <person name="Church G.M."/>
            <person name="Richardson P."/>
            <person name="Chisholm S.W."/>
        </authorList>
    </citation>
    <scope>NUCLEOTIDE SEQUENCE [LARGE SCALE GENOMIC DNA]</scope>
    <source>
        <strain>AS9601</strain>
    </source>
</reference>
<proteinExistence type="inferred from homology"/>
<dbReference type="EC" id="1.3.7.7" evidence="1"/>
<dbReference type="EMBL" id="CP000551">
    <property type="protein sequence ID" value="ABM69887.1"/>
    <property type="molecule type" value="Genomic_DNA"/>
</dbReference>
<dbReference type="RefSeq" id="WP_011818053.1">
    <property type="nucleotide sequence ID" value="NC_008816.1"/>
</dbReference>
<dbReference type="SMR" id="A2BQ26"/>
<dbReference type="STRING" id="146891.A9601_06011"/>
<dbReference type="KEGG" id="pmb:A9601_06011"/>
<dbReference type="eggNOG" id="COG2710">
    <property type="taxonomic scope" value="Bacteria"/>
</dbReference>
<dbReference type="HOGENOM" id="CLU_037170_0_0_3"/>
<dbReference type="OrthoDB" id="5714774at2"/>
<dbReference type="UniPathway" id="UPA00670"/>
<dbReference type="Proteomes" id="UP000002590">
    <property type="component" value="Chromosome"/>
</dbReference>
<dbReference type="GO" id="GO:0051539">
    <property type="term" value="F:4 iron, 4 sulfur cluster binding"/>
    <property type="evidence" value="ECO:0007669"/>
    <property type="project" value="UniProtKB-UniRule"/>
</dbReference>
<dbReference type="GO" id="GO:0005524">
    <property type="term" value="F:ATP binding"/>
    <property type="evidence" value="ECO:0007669"/>
    <property type="project" value="UniProtKB-UniRule"/>
</dbReference>
<dbReference type="GO" id="GO:0046872">
    <property type="term" value="F:metal ion binding"/>
    <property type="evidence" value="ECO:0007669"/>
    <property type="project" value="UniProtKB-KW"/>
</dbReference>
<dbReference type="GO" id="GO:0016730">
    <property type="term" value="F:oxidoreductase activity, acting on iron-sulfur proteins as donors"/>
    <property type="evidence" value="ECO:0007669"/>
    <property type="project" value="InterPro"/>
</dbReference>
<dbReference type="GO" id="GO:0016636">
    <property type="term" value="F:oxidoreductase activity, acting on the CH-CH group of donors, iron-sulfur protein as acceptor"/>
    <property type="evidence" value="ECO:0007669"/>
    <property type="project" value="UniProtKB-UniRule"/>
</dbReference>
<dbReference type="GO" id="GO:0036068">
    <property type="term" value="P:light-independent chlorophyll biosynthetic process"/>
    <property type="evidence" value="ECO:0007669"/>
    <property type="project" value="UniProtKB-UniRule"/>
</dbReference>
<dbReference type="GO" id="GO:0019685">
    <property type="term" value="P:photosynthesis, dark reaction"/>
    <property type="evidence" value="ECO:0007669"/>
    <property type="project" value="InterPro"/>
</dbReference>
<dbReference type="Gene3D" id="3.40.50.1980">
    <property type="entry name" value="Nitrogenase molybdenum iron protein domain"/>
    <property type="match status" value="3"/>
</dbReference>
<dbReference type="HAMAP" id="MF_00352">
    <property type="entry name" value="ChlN_BchN"/>
    <property type="match status" value="1"/>
</dbReference>
<dbReference type="InterPro" id="IPR050293">
    <property type="entry name" value="LIPOR_BchN/ChlN"/>
</dbReference>
<dbReference type="InterPro" id="IPR000510">
    <property type="entry name" value="Nase/OxRdtase_comp1"/>
</dbReference>
<dbReference type="InterPro" id="IPR005970">
    <property type="entry name" value="Protochl_reductN"/>
</dbReference>
<dbReference type="NCBIfam" id="TIGR01279">
    <property type="entry name" value="DPOR_bchN"/>
    <property type="match status" value="1"/>
</dbReference>
<dbReference type="NCBIfam" id="NF002768">
    <property type="entry name" value="PRK02842.1"/>
    <property type="match status" value="1"/>
</dbReference>
<dbReference type="PANTHER" id="PTHR39429">
    <property type="entry name" value="LIGHT-INDEPENDENT PROTOCHLOROPHYLLIDE REDUCTASE SUBUNIT N"/>
    <property type="match status" value="1"/>
</dbReference>
<dbReference type="PANTHER" id="PTHR39429:SF3">
    <property type="entry name" value="LIGHT-INDEPENDENT PROTOCHLOROPHYLLIDE REDUCTASE SUBUNIT N"/>
    <property type="match status" value="1"/>
</dbReference>
<dbReference type="Pfam" id="PF00148">
    <property type="entry name" value="Oxidored_nitro"/>
    <property type="match status" value="1"/>
</dbReference>
<dbReference type="PIRSF" id="PIRSF000162">
    <property type="entry name" value="P_chlorophyll_rd"/>
    <property type="match status" value="1"/>
</dbReference>
<dbReference type="SUPFAM" id="SSF53807">
    <property type="entry name" value="Helical backbone' metal receptor"/>
    <property type="match status" value="1"/>
</dbReference>
<keyword id="KW-0004">4Fe-4S</keyword>
<keyword id="KW-0067">ATP-binding</keyword>
<keyword id="KW-0149">Chlorophyll biosynthesis</keyword>
<keyword id="KW-0408">Iron</keyword>
<keyword id="KW-0411">Iron-sulfur</keyword>
<keyword id="KW-0479">Metal-binding</keyword>
<keyword id="KW-0547">Nucleotide-binding</keyword>
<keyword id="KW-0560">Oxidoreductase</keyword>
<keyword id="KW-0602">Photosynthesis</keyword>
<protein>
    <recommendedName>
        <fullName evidence="1">Light-independent protochlorophyllide reductase subunit N</fullName>
        <shortName evidence="1">DPOR subunit N</shortName>
        <shortName evidence="1">LI-POR subunit N</shortName>
        <ecNumber evidence="1">1.3.7.7</ecNumber>
    </recommendedName>
</protein>
<evidence type="ECO:0000255" key="1">
    <source>
        <dbReference type="HAMAP-Rule" id="MF_00352"/>
    </source>
</evidence>
<organism>
    <name type="scientific">Prochlorococcus marinus (strain AS9601)</name>
    <dbReference type="NCBI Taxonomy" id="146891"/>
    <lineage>
        <taxon>Bacteria</taxon>
        <taxon>Bacillati</taxon>
        <taxon>Cyanobacteriota</taxon>
        <taxon>Cyanophyceae</taxon>
        <taxon>Synechococcales</taxon>
        <taxon>Prochlorococcaceae</taxon>
        <taxon>Prochlorococcus</taxon>
    </lineage>
</organism>
<feature type="chain" id="PRO_0000324009" description="Light-independent protochlorophyllide reductase subunit N">
    <location>
        <begin position="1"/>
        <end position="418"/>
    </location>
</feature>
<feature type="binding site" evidence="1">
    <location>
        <position position="17"/>
    </location>
    <ligand>
        <name>[4Fe-4S] cluster</name>
        <dbReference type="ChEBI" id="CHEBI:49883"/>
        <note>ligand shared with heterodimeric partner</note>
    </ligand>
</feature>
<feature type="binding site" evidence="1">
    <location>
        <position position="42"/>
    </location>
    <ligand>
        <name>[4Fe-4S] cluster</name>
        <dbReference type="ChEBI" id="CHEBI:49883"/>
        <note>ligand shared with heterodimeric partner</note>
    </ligand>
</feature>
<feature type="binding site" evidence="1">
    <location>
        <position position="103"/>
    </location>
    <ligand>
        <name>[4Fe-4S] cluster</name>
        <dbReference type="ChEBI" id="CHEBI:49883"/>
        <note>ligand shared with heterodimeric partner</note>
    </ligand>
</feature>
<comment type="function">
    <text evidence="1">Component of the dark-operative protochlorophyllide reductase (DPOR) that uses Mg-ATP and reduced ferredoxin to reduce ring D of protochlorophyllide (Pchlide) to form chlorophyllide a (Chlide). This reaction is light-independent. The NB-protein (ChlN-ChlB) is the catalytic component of the complex.</text>
</comment>
<comment type="catalytic activity">
    <reaction evidence="1">
        <text>chlorophyllide a + oxidized 2[4Fe-4S]-[ferredoxin] + 2 ADP + 2 phosphate = protochlorophyllide a + reduced 2[4Fe-4S]-[ferredoxin] + 2 ATP + 2 H2O</text>
        <dbReference type="Rhea" id="RHEA:28202"/>
        <dbReference type="Rhea" id="RHEA-COMP:10002"/>
        <dbReference type="Rhea" id="RHEA-COMP:10004"/>
        <dbReference type="ChEBI" id="CHEBI:15377"/>
        <dbReference type="ChEBI" id="CHEBI:30616"/>
        <dbReference type="ChEBI" id="CHEBI:33722"/>
        <dbReference type="ChEBI" id="CHEBI:33723"/>
        <dbReference type="ChEBI" id="CHEBI:43474"/>
        <dbReference type="ChEBI" id="CHEBI:83348"/>
        <dbReference type="ChEBI" id="CHEBI:83350"/>
        <dbReference type="ChEBI" id="CHEBI:456216"/>
        <dbReference type="EC" id="1.3.7.7"/>
    </reaction>
</comment>
<comment type="cofactor">
    <cofactor evidence="1">
        <name>[4Fe-4S] cluster</name>
        <dbReference type="ChEBI" id="CHEBI:49883"/>
    </cofactor>
    <text evidence="1">Binds 1 [4Fe-4S] cluster per heterodimer. The cluster is bound at the heterodimer interface by residues from both subunits.</text>
</comment>
<comment type="pathway">
    <text evidence="1">Porphyrin-containing compound metabolism; chlorophyll biosynthesis (light-independent).</text>
</comment>
<comment type="subunit">
    <text evidence="1">Protochlorophyllide reductase is composed of three subunits; ChlL, ChlN and ChlB. Forms a heterotetramer of two ChlB and two ChlN subunits.</text>
</comment>
<comment type="similarity">
    <text evidence="1">Belongs to the BchN/ChlN family.</text>
</comment>
<gene>
    <name evidence="1" type="primary">chlN</name>
    <name type="ordered locus">A9601_06011</name>
</gene>
<name>CHLN_PROMS</name>
<accession>A2BQ26</accession>
<sequence>MSKVEFNKETGPREVFCGLTSIVWLHRRMPDAFFLVVGSRTCAHLIQSAAGVMIFAEPRFGTAILEEKDLAGLADAHEELDRVVNDLIARRPEIKTLFLVGSCPSEVIKLDLATVAEKLNKRFLGQVRFVNYSGSGIETTFTQGEDGALKALIPLMESSNEEKLLLVGTLANNVEDRFKKIFKNLGISNIESFPPRQSTELPKIGKNTKVLLTQPYLSDTVRDLKHRGCEIISAPFPLGIEGSTEWFLAAAKAFKINELKVHEILSPLINRAKLALESHKEILKGKRLFLLPESQLEISLARFLHNECEMDLVEVGTPYLNKDLMKEEINLLPDNTKIVEGQHVEKQLDRVRESNPDLVVCGMGLANPLEAEGISTKWSIEMVFSPIHGIDQAADLAGLFSKPLRRNQILTTKTLVTH</sequence>